<protein>
    <recommendedName>
        <fullName evidence="1">DNA mismatch repair protein MutS</fullName>
    </recommendedName>
</protein>
<accession>Q5WVP6</accession>
<proteinExistence type="inferred from homology"/>
<keyword id="KW-0067">ATP-binding</keyword>
<keyword id="KW-0227">DNA damage</keyword>
<keyword id="KW-0234">DNA repair</keyword>
<keyword id="KW-0238">DNA-binding</keyword>
<keyword id="KW-0547">Nucleotide-binding</keyword>
<evidence type="ECO:0000255" key="1">
    <source>
        <dbReference type="HAMAP-Rule" id="MF_00096"/>
    </source>
</evidence>
<organism>
    <name type="scientific">Legionella pneumophila (strain Lens)</name>
    <dbReference type="NCBI Taxonomy" id="297245"/>
    <lineage>
        <taxon>Bacteria</taxon>
        <taxon>Pseudomonadati</taxon>
        <taxon>Pseudomonadota</taxon>
        <taxon>Gammaproteobacteria</taxon>
        <taxon>Legionellales</taxon>
        <taxon>Legionellaceae</taxon>
        <taxon>Legionella</taxon>
    </lineage>
</organism>
<dbReference type="EMBL" id="CR628337">
    <property type="protein sequence ID" value="CAH16008.1"/>
    <property type="molecule type" value="Genomic_DNA"/>
</dbReference>
<dbReference type="RefSeq" id="WP_011215778.1">
    <property type="nucleotide sequence ID" value="NC_006369.1"/>
</dbReference>
<dbReference type="SMR" id="Q5WVP6"/>
<dbReference type="KEGG" id="lpf:lpl1769"/>
<dbReference type="LegioList" id="lpl1769"/>
<dbReference type="HOGENOM" id="CLU_002472_4_0_6"/>
<dbReference type="Proteomes" id="UP000002517">
    <property type="component" value="Chromosome"/>
</dbReference>
<dbReference type="GO" id="GO:0005829">
    <property type="term" value="C:cytosol"/>
    <property type="evidence" value="ECO:0007669"/>
    <property type="project" value="TreeGrafter"/>
</dbReference>
<dbReference type="GO" id="GO:0005524">
    <property type="term" value="F:ATP binding"/>
    <property type="evidence" value="ECO:0007669"/>
    <property type="project" value="UniProtKB-UniRule"/>
</dbReference>
<dbReference type="GO" id="GO:0140664">
    <property type="term" value="F:ATP-dependent DNA damage sensor activity"/>
    <property type="evidence" value="ECO:0007669"/>
    <property type="project" value="InterPro"/>
</dbReference>
<dbReference type="GO" id="GO:0003684">
    <property type="term" value="F:damaged DNA binding"/>
    <property type="evidence" value="ECO:0007669"/>
    <property type="project" value="UniProtKB-UniRule"/>
</dbReference>
<dbReference type="GO" id="GO:0030983">
    <property type="term" value="F:mismatched DNA binding"/>
    <property type="evidence" value="ECO:0007669"/>
    <property type="project" value="InterPro"/>
</dbReference>
<dbReference type="GO" id="GO:0006298">
    <property type="term" value="P:mismatch repair"/>
    <property type="evidence" value="ECO:0007669"/>
    <property type="project" value="UniProtKB-UniRule"/>
</dbReference>
<dbReference type="CDD" id="cd03284">
    <property type="entry name" value="ABC_MutS1"/>
    <property type="match status" value="1"/>
</dbReference>
<dbReference type="FunFam" id="1.10.1420.10:FF:000002">
    <property type="entry name" value="DNA mismatch repair protein MutS"/>
    <property type="match status" value="1"/>
</dbReference>
<dbReference type="FunFam" id="3.40.1170.10:FF:000001">
    <property type="entry name" value="DNA mismatch repair protein MutS"/>
    <property type="match status" value="1"/>
</dbReference>
<dbReference type="FunFam" id="3.40.50.300:FF:000870">
    <property type="entry name" value="MutS protein homolog 4"/>
    <property type="match status" value="1"/>
</dbReference>
<dbReference type="Gene3D" id="1.10.1420.10">
    <property type="match status" value="2"/>
</dbReference>
<dbReference type="Gene3D" id="6.10.140.430">
    <property type="match status" value="1"/>
</dbReference>
<dbReference type="Gene3D" id="3.40.1170.10">
    <property type="entry name" value="DNA repair protein MutS, domain I"/>
    <property type="match status" value="1"/>
</dbReference>
<dbReference type="Gene3D" id="3.30.420.110">
    <property type="entry name" value="MutS, connector domain"/>
    <property type="match status" value="1"/>
</dbReference>
<dbReference type="Gene3D" id="3.40.50.300">
    <property type="entry name" value="P-loop containing nucleotide triphosphate hydrolases"/>
    <property type="match status" value="1"/>
</dbReference>
<dbReference type="HAMAP" id="MF_00096">
    <property type="entry name" value="MutS"/>
    <property type="match status" value="1"/>
</dbReference>
<dbReference type="InterPro" id="IPR005748">
    <property type="entry name" value="DNA_mismatch_repair_MutS"/>
</dbReference>
<dbReference type="InterPro" id="IPR007695">
    <property type="entry name" value="DNA_mismatch_repair_MutS-lik_N"/>
</dbReference>
<dbReference type="InterPro" id="IPR017261">
    <property type="entry name" value="DNA_mismatch_repair_MutS/MSH"/>
</dbReference>
<dbReference type="InterPro" id="IPR000432">
    <property type="entry name" value="DNA_mismatch_repair_MutS_C"/>
</dbReference>
<dbReference type="InterPro" id="IPR007861">
    <property type="entry name" value="DNA_mismatch_repair_MutS_clamp"/>
</dbReference>
<dbReference type="InterPro" id="IPR007696">
    <property type="entry name" value="DNA_mismatch_repair_MutS_core"/>
</dbReference>
<dbReference type="InterPro" id="IPR016151">
    <property type="entry name" value="DNA_mismatch_repair_MutS_N"/>
</dbReference>
<dbReference type="InterPro" id="IPR036187">
    <property type="entry name" value="DNA_mismatch_repair_MutS_sf"/>
</dbReference>
<dbReference type="InterPro" id="IPR007860">
    <property type="entry name" value="DNA_mmatch_repair_MutS_con_dom"/>
</dbReference>
<dbReference type="InterPro" id="IPR045076">
    <property type="entry name" value="MutS"/>
</dbReference>
<dbReference type="InterPro" id="IPR036678">
    <property type="entry name" value="MutS_con_dom_sf"/>
</dbReference>
<dbReference type="InterPro" id="IPR027417">
    <property type="entry name" value="P-loop_NTPase"/>
</dbReference>
<dbReference type="NCBIfam" id="TIGR01070">
    <property type="entry name" value="mutS1"/>
    <property type="match status" value="1"/>
</dbReference>
<dbReference type="NCBIfam" id="NF003810">
    <property type="entry name" value="PRK05399.1"/>
    <property type="match status" value="1"/>
</dbReference>
<dbReference type="PANTHER" id="PTHR11361:SF34">
    <property type="entry name" value="DNA MISMATCH REPAIR PROTEIN MSH1, MITOCHONDRIAL"/>
    <property type="match status" value="1"/>
</dbReference>
<dbReference type="PANTHER" id="PTHR11361">
    <property type="entry name" value="DNA MISMATCH REPAIR PROTEIN MUTS FAMILY MEMBER"/>
    <property type="match status" value="1"/>
</dbReference>
<dbReference type="Pfam" id="PF01624">
    <property type="entry name" value="MutS_I"/>
    <property type="match status" value="1"/>
</dbReference>
<dbReference type="Pfam" id="PF05188">
    <property type="entry name" value="MutS_II"/>
    <property type="match status" value="1"/>
</dbReference>
<dbReference type="Pfam" id="PF05192">
    <property type="entry name" value="MutS_III"/>
    <property type="match status" value="1"/>
</dbReference>
<dbReference type="Pfam" id="PF05190">
    <property type="entry name" value="MutS_IV"/>
    <property type="match status" value="1"/>
</dbReference>
<dbReference type="Pfam" id="PF00488">
    <property type="entry name" value="MutS_V"/>
    <property type="match status" value="1"/>
</dbReference>
<dbReference type="PIRSF" id="PIRSF037677">
    <property type="entry name" value="DNA_mis_repair_Msh6"/>
    <property type="match status" value="1"/>
</dbReference>
<dbReference type="SMART" id="SM00534">
    <property type="entry name" value="MUTSac"/>
    <property type="match status" value="1"/>
</dbReference>
<dbReference type="SMART" id="SM00533">
    <property type="entry name" value="MUTSd"/>
    <property type="match status" value="1"/>
</dbReference>
<dbReference type="SUPFAM" id="SSF55271">
    <property type="entry name" value="DNA repair protein MutS, domain I"/>
    <property type="match status" value="1"/>
</dbReference>
<dbReference type="SUPFAM" id="SSF53150">
    <property type="entry name" value="DNA repair protein MutS, domain II"/>
    <property type="match status" value="1"/>
</dbReference>
<dbReference type="SUPFAM" id="SSF48334">
    <property type="entry name" value="DNA repair protein MutS, domain III"/>
    <property type="match status" value="1"/>
</dbReference>
<dbReference type="SUPFAM" id="SSF52540">
    <property type="entry name" value="P-loop containing nucleoside triphosphate hydrolases"/>
    <property type="match status" value="1"/>
</dbReference>
<dbReference type="PROSITE" id="PS00486">
    <property type="entry name" value="DNA_MISMATCH_REPAIR_2"/>
    <property type="match status" value="1"/>
</dbReference>
<comment type="function">
    <text evidence="1">This protein is involved in the repair of mismatches in DNA. It is possible that it carries out the mismatch recognition step. This protein has a weak ATPase activity.</text>
</comment>
<comment type="similarity">
    <text evidence="1">Belongs to the DNA mismatch repair MutS family.</text>
</comment>
<sequence>MASSHTPMMQQYLRIKTDYPDMLLFYRMGDFYELFFDDAKRASQLLDLTLTHRGQSADKPIPMAGVPYHAVENYLARLLKKGESVAICEQIGDPATSKGPVERQVTRIITPGTVTDEALLDARKDNILLAIHTQKQKIGIAWVDLGGGRFHLQELTEEHQLNAELVRLQPAELLCKESTPLPSFCSNFAVKFRPGWEFDASNAHKLLCEQFSVTDLSAFGEQNYPTALIAAGALLAYLKTTQKQSLPHLTTLTLEQSEDYLQLDASTQRHLELFENIHGGGEHCLLSILDKTACAMGSRLLKRWLGKPLKQHAIIQTRQQAIKEIIFLQQDVSLHQLIKQCADVERIVSRIALKSARPRDLVSLLQTLILLPAIHDELQENKTLLINEIKKEISPLPLLQQLLETAIIDNPPMLIRDGGVIAPGFDEELDELRNLSSNAHETLVKLEQEEKNRTGLSTLKLGYNSVQGFYIELSKAQAQNAPPHFHRKQTLKNVERYITPELKLFEDKVLSAQSKALAREKWLYDNLLEEIQQYIPELSDLAKSLAQLDVLVTLTERAQSLNWNCPNLVPESGIMIQAGRHPVIEPLLQERFIANDLELKPNQNMLLITGPNMGGKSTYMRQTALIVLLAHIGSFVPADEVRLGPLDRIFTRIGASDDLSSGRSTFMVEMTETAQILRQATSQSLVLIDEIGRGTSTYDGMALAYASCAFLASTIKAYTLFSTHYLELTELPKDFSCIRNVHLQASIKTGQIVFLYRVEEGCANRSYGLEVAELAGIPKEVLKLAHEHLNQIQDTQSILVQTQIIKPPTSPILTELKKIDPDRLTAKEALDLIYKLKQLECVESIN</sequence>
<gene>
    <name evidence="1" type="primary">mutS</name>
    <name type="ordered locus">lpl1769</name>
</gene>
<feature type="chain" id="PRO_0000224379" description="DNA mismatch repair protein MutS">
    <location>
        <begin position="1"/>
        <end position="846"/>
    </location>
</feature>
<feature type="binding site" evidence="1">
    <location>
        <begin position="610"/>
        <end position="617"/>
    </location>
    <ligand>
        <name>ATP</name>
        <dbReference type="ChEBI" id="CHEBI:30616"/>
    </ligand>
</feature>
<name>MUTS_LEGPL</name>
<reference key="1">
    <citation type="journal article" date="2004" name="Nat. Genet.">
        <title>Evidence in the Legionella pneumophila genome for exploitation of host cell functions and high genome plasticity.</title>
        <authorList>
            <person name="Cazalet C."/>
            <person name="Rusniok C."/>
            <person name="Brueggemann H."/>
            <person name="Zidane N."/>
            <person name="Magnier A."/>
            <person name="Ma L."/>
            <person name="Tichit M."/>
            <person name="Jarraud S."/>
            <person name="Bouchier C."/>
            <person name="Vandenesch F."/>
            <person name="Kunst F."/>
            <person name="Etienne J."/>
            <person name="Glaser P."/>
            <person name="Buchrieser C."/>
        </authorList>
    </citation>
    <scope>NUCLEOTIDE SEQUENCE [LARGE SCALE GENOMIC DNA]</scope>
    <source>
        <strain>Lens</strain>
    </source>
</reference>